<feature type="chain" id="PRO_0000409079" description="UDP-glycosyltransferase 73B4">
    <location>
        <begin position="1"/>
        <end position="484"/>
    </location>
</feature>
<feature type="active site" description="Proton acceptor" evidence="1">
    <location>
        <position position="18"/>
    </location>
</feature>
<feature type="active site" description="Charge relay" evidence="1">
    <location>
        <position position="129"/>
    </location>
</feature>
<feature type="binding site" evidence="2">
    <location>
        <position position="18"/>
    </location>
    <ligand>
        <name>an anthocyanidin</name>
        <dbReference type="ChEBI" id="CHEBI:143576"/>
    </ligand>
</feature>
<feature type="binding site" evidence="2">
    <location>
        <position position="89"/>
    </location>
    <ligand>
        <name>an anthocyanidin</name>
        <dbReference type="ChEBI" id="CHEBI:143576"/>
    </ligand>
</feature>
<feature type="binding site" evidence="1">
    <location>
        <position position="356"/>
    </location>
    <ligand>
        <name>UDP-alpha-D-glucose</name>
        <dbReference type="ChEBI" id="CHEBI:58885"/>
    </ligand>
</feature>
<feature type="binding site" evidence="1">
    <location>
        <position position="358"/>
    </location>
    <ligand>
        <name>UDP-alpha-D-glucose</name>
        <dbReference type="ChEBI" id="CHEBI:58885"/>
    </ligand>
</feature>
<feature type="binding site" evidence="1">
    <location>
        <position position="373"/>
    </location>
    <ligand>
        <name>UDP-alpha-D-glucose</name>
        <dbReference type="ChEBI" id="CHEBI:58885"/>
    </ligand>
</feature>
<feature type="binding site" evidence="1">
    <location>
        <position position="376"/>
    </location>
    <ligand>
        <name>UDP-alpha-D-glucose</name>
        <dbReference type="ChEBI" id="CHEBI:58885"/>
    </ligand>
</feature>
<feature type="binding site" evidence="1">
    <location>
        <position position="377"/>
    </location>
    <ligand>
        <name>UDP-alpha-D-glucose</name>
        <dbReference type="ChEBI" id="CHEBI:58885"/>
    </ligand>
</feature>
<feature type="binding site" evidence="1">
    <location>
        <position position="378"/>
    </location>
    <ligand>
        <name>UDP-alpha-D-glucose</name>
        <dbReference type="ChEBI" id="CHEBI:58885"/>
    </ligand>
</feature>
<feature type="binding site" evidence="1">
    <location>
        <position position="381"/>
    </location>
    <ligand>
        <name>UDP-alpha-D-glucose</name>
        <dbReference type="ChEBI" id="CHEBI:58885"/>
    </ligand>
</feature>
<feature type="binding site" evidence="2">
    <location>
        <position position="396"/>
    </location>
    <ligand>
        <name>an anthocyanidin</name>
        <dbReference type="ChEBI" id="CHEBI:143576"/>
    </ligand>
</feature>
<feature type="binding site" evidence="1">
    <location>
        <position position="397"/>
    </location>
    <ligand>
        <name>UDP-alpha-D-glucose</name>
        <dbReference type="ChEBI" id="CHEBI:58885"/>
    </ligand>
</feature>
<feature type="binding site" evidence="1">
    <location>
        <position position="398"/>
    </location>
    <ligand>
        <name>UDP-alpha-D-glucose</name>
        <dbReference type="ChEBI" id="CHEBI:58885"/>
    </ligand>
</feature>
<feature type="splice variant" id="VSP_041227" description="In isoform 2." evidence="7">
    <location>
        <begin position="189"/>
        <end position="402"/>
    </location>
</feature>
<organism>
    <name type="scientific">Arabidopsis thaliana</name>
    <name type="common">Mouse-ear cress</name>
    <dbReference type="NCBI Taxonomy" id="3702"/>
    <lineage>
        <taxon>Eukaryota</taxon>
        <taxon>Viridiplantae</taxon>
        <taxon>Streptophyta</taxon>
        <taxon>Embryophyta</taxon>
        <taxon>Tracheophyta</taxon>
        <taxon>Spermatophyta</taxon>
        <taxon>Magnoliopsida</taxon>
        <taxon>eudicotyledons</taxon>
        <taxon>Gunneridae</taxon>
        <taxon>Pentapetalae</taxon>
        <taxon>rosids</taxon>
        <taxon>malvids</taxon>
        <taxon>Brassicales</taxon>
        <taxon>Brassicaceae</taxon>
        <taxon>Camelineae</taxon>
        <taxon>Arabidopsis</taxon>
    </lineage>
</organism>
<gene>
    <name type="primary">UGT73B4</name>
    <name type="ordered locus">At2g15490</name>
    <name type="ORF">F9O13.4</name>
</gene>
<name>U73B4_ARATH</name>
<evidence type="ECO:0000250" key="1">
    <source>
        <dbReference type="UniProtKB" id="A0A0A1HA03"/>
    </source>
</evidence>
<evidence type="ECO:0000250" key="2">
    <source>
        <dbReference type="UniProtKB" id="P51094"/>
    </source>
</evidence>
<evidence type="ECO:0000269" key="3">
    <source>
    </source>
</evidence>
<evidence type="ECO:0000269" key="4">
    <source>
    </source>
</evidence>
<evidence type="ECO:0000269" key="5">
    <source>
    </source>
</evidence>
<evidence type="ECO:0000269" key="6">
    <source>
    </source>
</evidence>
<evidence type="ECO:0000305" key="7"/>
<sequence>MNREQIHILFFPFMAHGHMIPLLDMAKLFARRGAKSTLLTTPINAKILEKPIEAFKVQNPDLEIGIKILNFPCVELGLPEGCENRDFINSYQKSDSFDLFLKFLFSTKYMKQQLESFIETTKPSALVADMFFPWATESAEKIGVPRLVFHGTSSFALCCSYNMRIHKPHKKVASSSTPFVIPGLPGDIVITEDQANVTNEETPFGKFWKEVRESETSSFGVLVNSFYELESSYADFYRSFVAKKAWHIGPLSLSNRGIAEKAGRGKKANIDEQECLKWLDSKTPGSVVYLSFGSGTGLPNEQLLEIAFGLEGSGQNFIWVVSKNENQVGTGENEDWLPKGFEERNKGKGLIIRGWAPQVLILDHKAIGGFVTHCGWNSTLEGIAAGLPMVTWPMGAEQFYNEKLLTKVLRIGVNVGATELVKKGKLISRAQVEKAVREVIGGEKAEERRLRAKELGEMAKAAVEEGGSSYNDVNKFMEELNGRK</sequence>
<comment type="function">
    <text evidence="3 4 6">Possesses quercetin 3-O-glucosyltransferase and low 7-O-glucosyltransferase activities in vitro. Also active in vitro on benzoates and benzoate derivatives. Can detoxify the explosive 2,4,6-trinitrotoluene in plant by forming O- or C-glucose conjugates.</text>
</comment>
<comment type="catalytic activity">
    <reaction>
        <text>a flavonol + UDP-alpha-D-glucose = a flavonol 3-O-beta-D-glucoside + UDP + H(+)</text>
        <dbReference type="Rhea" id="RHEA:22300"/>
        <dbReference type="ChEBI" id="CHEBI:15378"/>
        <dbReference type="ChEBI" id="CHEBI:16816"/>
        <dbReference type="ChEBI" id="CHEBI:28802"/>
        <dbReference type="ChEBI" id="CHEBI:58223"/>
        <dbReference type="ChEBI" id="CHEBI:58885"/>
        <dbReference type="EC" id="2.4.1.91"/>
    </reaction>
</comment>
<comment type="alternative products">
    <event type="alternative splicing"/>
    <isoform>
        <id>Q7Y232-1</id>
        <name>1</name>
        <sequence type="displayed"/>
    </isoform>
    <isoform>
        <id>Q7Y232-2</id>
        <name>2</name>
        <sequence type="described" ref="VSP_041227"/>
    </isoform>
</comment>
<comment type="tissue specificity">
    <text evidence="5">Specifically expressed in roots.</text>
</comment>
<comment type="induction">
    <text evidence="5">Induced by pathogen infection and salicylic acid.</text>
</comment>
<comment type="miscellaneous">
    <text>Plants overexpressing UGT73B4 show enhanced root growth in seedlings grown in presence of 2,4,6-trinitrotoluene.</text>
</comment>
<comment type="similarity">
    <text evidence="7">Belongs to the UDP-glycosyltransferase family.</text>
</comment>
<comment type="sequence caution" evidence="7">
    <conflict type="erroneous initiation">
        <sequence resource="EMBL-CDS" id="AAD17393"/>
    </conflict>
    <text>Truncated N-terminus.</text>
</comment>
<keyword id="KW-0025">Alternative splicing</keyword>
<keyword id="KW-0216">Detoxification</keyword>
<keyword id="KW-0328">Glycosyltransferase</keyword>
<keyword id="KW-1185">Reference proteome</keyword>
<keyword id="KW-0808">Transferase</keyword>
<proteinExistence type="evidence at transcript level"/>
<accession>Q7Y232</accession>
<accession>Q3EBZ8</accession>
<accession>Q9ZQG3</accession>
<protein>
    <recommendedName>
        <fullName>UDP-glycosyltransferase 73B4</fullName>
        <ecNumber>2.4.1.-</ecNumber>
    </recommendedName>
    <alternativeName>
        <fullName>Flavonol 3-O-glucosyltransferase UGT73B4</fullName>
        <ecNumber>2.4.1.91</ecNumber>
    </alternativeName>
</protein>
<reference key="1">
    <citation type="journal article" date="1999" name="Nature">
        <title>Sequence and analysis of chromosome 2 of the plant Arabidopsis thaliana.</title>
        <authorList>
            <person name="Lin X."/>
            <person name="Kaul S."/>
            <person name="Rounsley S.D."/>
            <person name="Shea T.P."/>
            <person name="Benito M.-I."/>
            <person name="Town C.D."/>
            <person name="Fujii C.Y."/>
            <person name="Mason T.M."/>
            <person name="Bowman C.L."/>
            <person name="Barnstead M.E."/>
            <person name="Feldblyum T.V."/>
            <person name="Buell C.R."/>
            <person name="Ketchum K.A."/>
            <person name="Lee J.J."/>
            <person name="Ronning C.M."/>
            <person name="Koo H.L."/>
            <person name="Moffat K.S."/>
            <person name="Cronin L.A."/>
            <person name="Shen M."/>
            <person name="Pai G."/>
            <person name="Van Aken S."/>
            <person name="Umayam L."/>
            <person name="Tallon L.J."/>
            <person name="Gill J.E."/>
            <person name="Adams M.D."/>
            <person name="Carrera A.J."/>
            <person name="Creasy T.H."/>
            <person name="Goodman H.M."/>
            <person name="Somerville C.R."/>
            <person name="Copenhaver G.P."/>
            <person name="Preuss D."/>
            <person name="Nierman W.C."/>
            <person name="White O."/>
            <person name="Eisen J.A."/>
            <person name="Salzberg S.L."/>
            <person name="Fraser C.M."/>
            <person name="Venter J.C."/>
        </authorList>
    </citation>
    <scope>NUCLEOTIDE SEQUENCE [LARGE SCALE GENOMIC DNA]</scope>
    <source>
        <strain>cv. Columbia</strain>
    </source>
</reference>
<reference key="2">
    <citation type="journal article" date="2017" name="Plant J.">
        <title>Araport11: a complete reannotation of the Arabidopsis thaliana reference genome.</title>
        <authorList>
            <person name="Cheng C.Y."/>
            <person name="Krishnakumar V."/>
            <person name="Chan A.P."/>
            <person name="Thibaud-Nissen F."/>
            <person name="Schobel S."/>
            <person name="Town C.D."/>
        </authorList>
    </citation>
    <scope>GENOME REANNOTATION</scope>
    <source>
        <strain>cv. Columbia</strain>
    </source>
</reference>
<reference key="3">
    <citation type="journal article" date="2003" name="Science">
        <title>Empirical analysis of transcriptional activity in the Arabidopsis genome.</title>
        <authorList>
            <person name="Yamada K."/>
            <person name="Lim J."/>
            <person name="Dale J.M."/>
            <person name="Chen H."/>
            <person name="Shinn P."/>
            <person name="Palm C.J."/>
            <person name="Southwick A.M."/>
            <person name="Wu H.C."/>
            <person name="Kim C.J."/>
            <person name="Nguyen M."/>
            <person name="Pham P.K."/>
            <person name="Cheuk R.F."/>
            <person name="Karlin-Newmann G."/>
            <person name="Liu S.X."/>
            <person name="Lam B."/>
            <person name="Sakano H."/>
            <person name="Wu T."/>
            <person name="Yu G."/>
            <person name="Miranda M."/>
            <person name="Quach H.L."/>
            <person name="Tripp M."/>
            <person name="Chang C.H."/>
            <person name="Lee J.M."/>
            <person name="Toriumi M.J."/>
            <person name="Chan M.M."/>
            <person name="Tang C.C."/>
            <person name="Onodera C.S."/>
            <person name="Deng J.M."/>
            <person name="Akiyama K."/>
            <person name="Ansari Y."/>
            <person name="Arakawa T."/>
            <person name="Banh J."/>
            <person name="Banno F."/>
            <person name="Bowser L."/>
            <person name="Brooks S.Y."/>
            <person name="Carninci P."/>
            <person name="Chao Q."/>
            <person name="Choy N."/>
            <person name="Enju A."/>
            <person name="Goldsmith A.D."/>
            <person name="Gurjal M."/>
            <person name="Hansen N.F."/>
            <person name="Hayashizaki Y."/>
            <person name="Johnson-Hopson C."/>
            <person name="Hsuan V.W."/>
            <person name="Iida K."/>
            <person name="Karnes M."/>
            <person name="Khan S."/>
            <person name="Koesema E."/>
            <person name="Ishida J."/>
            <person name="Jiang P.X."/>
            <person name="Jones T."/>
            <person name="Kawai J."/>
            <person name="Kamiya A."/>
            <person name="Meyers C."/>
            <person name="Nakajima M."/>
            <person name="Narusaka M."/>
            <person name="Seki M."/>
            <person name="Sakurai T."/>
            <person name="Satou M."/>
            <person name="Tamse R."/>
            <person name="Vaysberg M."/>
            <person name="Wallender E.K."/>
            <person name="Wong C."/>
            <person name="Yamamura Y."/>
            <person name="Yuan S."/>
            <person name="Shinozaki K."/>
            <person name="Davis R.W."/>
            <person name="Theologis A."/>
            <person name="Ecker J.R."/>
        </authorList>
    </citation>
    <scope>NUCLEOTIDE SEQUENCE [LARGE SCALE MRNA] (ISOFORM 1)</scope>
    <source>
        <strain>cv. Columbia</strain>
    </source>
</reference>
<reference key="4">
    <citation type="submission" date="2006-07" db="EMBL/GenBank/DDBJ databases">
        <title>Large-scale analysis of RIKEN Arabidopsis full-length (RAFL) cDNAs.</title>
        <authorList>
            <person name="Totoki Y."/>
            <person name="Seki M."/>
            <person name="Ishida J."/>
            <person name="Nakajima M."/>
            <person name="Enju A."/>
            <person name="Kamiya A."/>
            <person name="Narusaka M."/>
            <person name="Shin-i T."/>
            <person name="Nakagawa M."/>
            <person name="Sakamoto N."/>
            <person name="Oishi K."/>
            <person name="Kohara Y."/>
            <person name="Kobayashi M."/>
            <person name="Toyoda A."/>
            <person name="Sakaki Y."/>
            <person name="Sakurai T."/>
            <person name="Iida K."/>
            <person name="Akiyama K."/>
            <person name="Satou M."/>
            <person name="Toyoda T."/>
            <person name="Konagaya A."/>
            <person name="Carninci P."/>
            <person name="Kawai J."/>
            <person name="Hayashizaki Y."/>
            <person name="Shinozaki K."/>
        </authorList>
    </citation>
    <scope>NUCLEOTIDE SEQUENCE [LARGE SCALE MRNA] (ISOFORM 1)</scope>
    <source>
        <strain>cv. Columbia</strain>
    </source>
</reference>
<reference key="5">
    <citation type="journal article" date="2001" name="J. Biol. Chem.">
        <title>Phylogenetic analysis of the UDP-glycosyltransferase multigene family of Arabidopsis thaliana.</title>
        <authorList>
            <person name="Li Y."/>
            <person name="Baldauf S."/>
            <person name="Lim E.K."/>
            <person name="Bowles D.J."/>
        </authorList>
    </citation>
    <scope>GENE FAMILY</scope>
</reference>
<reference key="6">
    <citation type="journal article" date="2002" name="J. Biol. Chem.">
        <title>The activity of Arabidopsis glycosyltransferases toward salicylic acid, 4-hydroxybenzoic acid, and other benzoates.</title>
        <authorList>
            <person name="Lim E.K."/>
            <person name="Doucet C.J."/>
            <person name="Li Y."/>
            <person name="Elias L."/>
            <person name="Worrall D."/>
            <person name="Spencer S.P."/>
            <person name="Ross J."/>
            <person name="Bowles D.J."/>
        </authorList>
    </citation>
    <scope>FUNCTION</scope>
</reference>
<reference key="7">
    <citation type="journal article" date="2004" name="Biotechnol. Bioeng.">
        <title>Arabidopsis glycosyltransferases as biocatalysts in fermentation for regioselective synthesis of diverse quercetin glucosides.</title>
        <authorList>
            <person name="Lim E.K."/>
            <person name="Ashford D.A."/>
            <person name="Hou B."/>
            <person name="Jackson R.G."/>
            <person name="Bowles D.J."/>
        </authorList>
    </citation>
    <scope>FUNCTION</scope>
</reference>
<reference key="8">
    <citation type="journal article" date="2005" name="Plant Physiol.">
        <title>Pathogen-responsive expression of glycosyltransferase genes UGT73B3 and UGT73B5 is necessary for resistance to Pseudomonas syringae pv tomato in Arabidopsis.</title>
        <authorList>
            <person name="Langlois-Meurinne M."/>
            <person name="Gachon C.M."/>
            <person name="Saindrenan P."/>
        </authorList>
    </citation>
    <scope>TISSUE SPECIFICITY</scope>
    <scope>INDUCTION BY PATHOGEN AND SALICYLIC ACID</scope>
</reference>
<reference key="9">
    <citation type="journal article" date="2008" name="Plant J.">
        <title>Detoxification of the explosive 2,4,6-trinitrotoluene in Arabidopsis: discovery of bifunctional O- and C-glucosyltransferases.</title>
        <authorList>
            <person name="Gandia-Herrero F."/>
            <person name="Lorenz A."/>
            <person name="Larson T."/>
            <person name="Graham I.A."/>
            <person name="Bowles D.J."/>
            <person name="Rylott E.L."/>
            <person name="Bruce N.C."/>
        </authorList>
    </citation>
    <scope>FUNCTION</scope>
</reference>
<dbReference type="EC" id="2.4.1.-"/>
<dbReference type="EC" id="2.4.1.91"/>
<dbReference type="EMBL" id="AC006248">
    <property type="protein sequence ID" value="AAD17393.1"/>
    <property type="status" value="ALT_INIT"/>
    <property type="molecule type" value="Genomic_DNA"/>
</dbReference>
<dbReference type="EMBL" id="CP002685">
    <property type="protein sequence ID" value="AEC06407.1"/>
    <property type="molecule type" value="Genomic_DNA"/>
</dbReference>
<dbReference type="EMBL" id="CP002685">
    <property type="protein sequence ID" value="AEC06408.1"/>
    <property type="molecule type" value="Genomic_DNA"/>
</dbReference>
<dbReference type="EMBL" id="BT008319">
    <property type="protein sequence ID" value="AAP37678.1"/>
    <property type="molecule type" value="mRNA"/>
</dbReference>
<dbReference type="EMBL" id="AK227684">
    <property type="protein sequence ID" value="BAE99671.1"/>
    <property type="molecule type" value="mRNA"/>
</dbReference>
<dbReference type="PIR" id="F84529">
    <property type="entry name" value="F84529"/>
</dbReference>
<dbReference type="RefSeq" id="NP_179151.2">
    <molecule id="Q7Y232-1"/>
    <property type="nucleotide sequence ID" value="NM_127109.3"/>
</dbReference>
<dbReference type="RefSeq" id="NP_973469.1">
    <molecule id="Q7Y232-2"/>
    <property type="nucleotide sequence ID" value="NM_201740.1"/>
</dbReference>
<dbReference type="SMR" id="Q7Y232"/>
<dbReference type="FunCoup" id="Q7Y232">
    <property type="interactions" value="149"/>
</dbReference>
<dbReference type="IntAct" id="Q7Y232">
    <property type="interactions" value="1"/>
</dbReference>
<dbReference type="STRING" id="3702.Q7Y232"/>
<dbReference type="CAZy" id="GT1">
    <property type="family name" value="Glycosyltransferase Family 1"/>
</dbReference>
<dbReference type="iPTMnet" id="Q7Y232"/>
<dbReference type="PaxDb" id="3702-AT2G15490.1"/>
<dbReference type="ProteomicsDB" id="228671">
    <molecule id="Q7Y232-1"/>
</dbReference>
<dbReference type="EnsemblPlants" id="AT2G15490.1">
    <molecule id="Q7Y232-1"/>
    <property type="protein sequence ID" value="AT2G15490.1"/>
    <property type="gene ID" value="AT2G15490"/>
</dbReference>
<dbReference type="EnsemblPlants" id="AT2G15490.2">
    <molecule id="Q7Y232-2"/>
    <property type="protein sequence ID" value="AT2G15490.2"/>
    <property type="gene ID" value="AT2G15490"/>
</dbReference>
<dbReference type="GeneID" id="816041"/>
<dbReference type="Gramene" id="AT2G15490.1">
    <molecule id="Q7Y232-1"/>
    <property type="protein sequence ID" value="AT2G15490.1"/>
    <property type="gene ID" value="AT2G15490"/>
</dbReference>
<dbReference type="Gramene" id="AT2G15490.2">
    <molecule id="Q7Y232-2"/>
    <property type="protein sequence ID" value="AT2G15490.2"/>
    <property type="gene ID" value="AT2G15490"/>
</dbReference>
<dbReference type="KEGG" id="ath:AT2G15490"/>
<dbReference type="Araport" id="AT2G15490"/>
<dbReference type="TAIR" id="AT2G15490">
    <property type="gene designation" value="UGT73B4"/>
</dbReference>
<dbReference type="eggNOG" id="KOG1192">
    <property type="taxonomic scope" value="Eukaryota"/>
</dbReference>
<dbReference type="InParanoid" id="Q7Y232"/>
<dbReference type="OMA" id="CIDEHEC"/>
<dbReference type="PhylomeDB" id="Q7Y232"/>
<dbReference type="PRO" id="PR:Q7Y232"/>
<dbReference type="Proteomes" id="UP000006548">
    <property type="component" value="Chromosome 2"/>
</dbReference>
<dbReference type="ExpressionAtlas" id="Q7Y232">
    <property type="expression patterns" value="baseline and differential"/>
</dbReference>
<dbReference type="GO" id="GO:0047893">
    <property type="term" value="F:flavonol 3-O-glucosyltransferase activity"/>
    <property type="evidence" value="ECO:0007669"/>
    <property type="project" value="UniProtKB-EC"/>
</dbReference>
<dbReference type="GO" id="GO:0080043">
    <property type="term" value="F:quercetin 3-O-glucosyltransferase activity"/>
    <property type="evidence" value="ECO:0000314"/>
    <property type="project" value="TAIR"/>
</dbReference>
<dbReference type="GO" id="GO:0080044">
    <property type="term" value="F:quercetin 7-O-glucosyltransferase activity"/>
    <property type="evidence" value="ECO:0000314"/>
    <property type="project" value="TAIR"/>
</dbReference>
<dbReference type="GO" id="GO:0035251">
    <property type="term" value="F:UDP-glucosyltransferase activity"/>
    <property type="evidence" value="ECO:0000314"/>
    <property type="project" value="TAIR"/>
</dbReference>
<dbReference type="GO" id="GO:0051707">
    <property type="term" value="P:response to other organism"/>
    <property type="evidence" value="ECO:0000270"/>
    <property type="project" value="TAIR"/>
</dbReference>
<dbReference type="GO" id="GO:0009636">
    <property type="term" value="P:response to toxic substance"/>
    <property type="evidence" value="ECO:0007669"/>
    <property type="project" value="UniProtKB-KW"/>
</dbReference>
<dbReference type="CDD" id="cd03784">
    <property type="entry name" value="GT1_Gtf-like"/>
    <property type="match status" value="1"/>
</dbReference>
<dbReference type="FunFam" id="3.40.50.2000:FF:000047">
    <property type="entry name" value="Glycosyltransferase"/>
    <property type="match status" value="1"/>
</dbReference>
<dbReference type="FunFam" id="3.40.50.2000:FF:000071">
    <property type="entry name" value="Glycosyltransferase"/>
    <property type="match status" value="1"/>
</dbReference>
<dbReference type="Gene3D" id="3.40.50.2000">
    <property type="entry name" value="Glycogen Phosphorylase B"/>
    <property type="match status" value="2"/>
</dbReference>
<dbReference type="InterPro" id="IPR002213">
    <property type="entry name" value="UDP_glucos_trans"/>
</dbReference>
<dbReference type="InterPro" id="IPR035595">
    <property type="entry name" value="UDP_glycos_trans_CS"/>
</dbReference>
<dbReference type="PANTHER" id="PTHR48047">
    <property type="entry name" value="GLYCOSYLTRANSFERASE"/>
    <property type="match status" value="1"/>
</dbReference>
<dbReference type="PANTHER" id="PTHR48047:SF45">
    <property type="entry name" value="SCOPOLETIN GLUCOSYLTRANSFERASE-LIKE"/>
    <property type="match status" value="1"/>
</dbReference>
<dbReference type="Pfam" id="PF00201">
    <property type="entry name" value="UDPGT"/>
    <property type="match status" value="1"/>
</dbReference>
<dbReference type="SUPFAM" id="SSF53756">
    <property type="entry name" value="UDP-Glycosyltransferase/glycogen phosphorylase"/>
    <property type="match status" value="1"/>
</dbReference>
<dbReference type="PROSITE" id="PS00375">
    <property type="entry name" value="UDPGT"/>
    <property type="match status" value="1"/>
</dbReference>